<keyword id="KW-1185">Reference proteome</keyword>
<keyword id="KW-0687">Ribonucleoprotein</keyword>
<keyword id="KW-0689">Ribosomal protein</keyword>
<protein>
    <recommendedName>
        <fullName evidence="1">Large ribosomal subunit protein uL13</fullName>
    </recommendedName>
    <alternativeName>
        <fullName evidence="2">50S ribosomal protein L13</fullName>
    </alternativeName>
</protein>
<accession>A1SA67</accession>
<organism>
    <name type="scientific">Shewanella amazonensis (strain ATCC BAA-1098 / SB2B)</name>
    <dbReference type="NCBI Taxonomy" id="326297"/>
    <lineage>
        <taxon>Bacteria</taxon>
        <taxon>Pseudomonadati</taxon>
        <taxon>Pseudomonadota</taxon>
        <taxon>Gammaproteobacteria</taxon>
        <taxon>Alteromonadales</taxon>
        <taxon>Shewanellaceae</taxon>
        <taxon>Shewanella</taxon>
    </lineage>
</organism>
<name>RL13_SHEAM</name>
<proteinExistence type="inferred from homology"/>
<reference key="1">
    <citation type="submission" date="2006-12" db="EMBL/GenBank/DDBJ databases">
        <title>Complete sequence of Shewanella amazonensis SB2B.</title>
        <authorList>
            <consortium name="US DOE Joint Genome Institute"/>
            <person name="Copeland A."/>
            <person name="Lucas S."/>
            <person name="Lapidus A."/>
            <person name="Barry K."/>
            <person name="Detter J.C."/>
            <person name="Glavina del Rio T."/>
            <person name="Hammon N."/>
            <person name="Israni S."/>
            <person name="Dalin E."/>
            <person name="Tice H."/>
            <person name="Pitluck S."/>
            <person name="Munk A.C."/>
            <person name="Brettin T."/>
            <person name="Bruce D."/>
            <person name="Han C."/>
            <person name="Tapia R."/>
            <person name="Gilna P."/>
            <person name="Schmutz J."/>
            <person name="Larimer F."/>
            <person name="Land M."/>
            <person name="Hauser L."/>
            <person name="Kyrpides N."/>
            <person name="Mikhailova N."/>
            <person name="Fredrickson J."/>
            <person name="Richardson P."/>
        </authorList>
    </citation>
    <scope>NUCLEOTIDE SEQUENCE [LARGE SCALE GENOMIC DNA]</scope>
    <source>
        <strain>ATCC BAA-1098 / SB2B</strain>
    </source>
</reference>
<sequence>MKTFTAKPETVSRDWYVVDAEGKTLGRIATEIASRLRGKHKPEYTPHVDTGDYIIVINAEKVTVTGNKAAGKMYYSHSGFPGGIKEINFEKLQAHKPEMIIEKAVKGMLPKGPLGRAMFRKLKVYAGAEHNHAAQQPQVLDI</sequence>
<comment type="function">
    <text evidence="1">This protein is one of the early assembly proteins of the 50S ribosomal subunit, although it is not seen to bind rRNA by itself. It is important during the early stages of 50S assembly.</text>
</comment>
<comment type="subunit">
    <text evidence="1">Part of the 50S ribosomal subunit.</text>
</comment>
<comment type="similarity">
    <text evidence="1">Belongs to the universal ribosomal protein uL13 family.</text>
</comment>
<gene>
    <name evidence="1" type="primary">rplM</name>
    <name type="ordered locus">Sama_3071</name>
</gene>
<evidence type="ECO:0000255" key="1">
    <source>
        <dbReference type="HAMAP-Rule" id="MF_01366"/>
    </source>
</evidence>
<evidence type="ECO:0000305" key="2"/>
<dbReference type="EMBL" id="CP000507">
    <property type="protein sequence ID" value="ABM01274.1"/>
    <property type="molecule type" value="Genomic_DNA"/>
</dbReference>
<dbReference type="RefSeq" id="WP_011761178.1">
    <property type="nucleotide sequence ID" value="NC_008700.1"/>
</dbReference>
<dbReference type="SMR" id="A1SA67"/>
<dbReference type="STRING" id="326297.Sama_3071"/>
<dbReference type="KEGG" id="saz:Sama_3071"/>
<dbReference type="eggNOG" id="COG0102">
    <property type="taxonomic scope" value="Bacteria"/>
</dbReference>
<dbReference type="HOGENOM" id="CLU_082184_2_2_6"/>
<dbReference type="OrthoDB" id="9801330at2"/>
<dbReference type="Proteomes" id="UP000009175">
    <property type="component" value="Chromosome"/>
</dbReference>
<dbReference type="GO" id="GO:0022625">
    <property type="term" value="C:cytosolic large ribosomal subunit"/>
    <property type="evidence" value="ECO:0007669"/>
    <property type="project" value="TreeGrafter"/>
</dbReference>
<dbReference type="GO" id="GO:0003729">
    <property type="term" value="F:mRNA binding"/>
    <property type="evidence" value="ECO:0007669"/>
    <property type="project" value="TreeGrafter"/>
</dbReference>
<dbReference type="GO" id="GO:0003735">
    <property type="term" value="F:structural constituent of ribosome"/>
    <property type="evidence" value="ECO:0007669"/>
    <property type="project" value="InterPro"/>
</dbReference>
<dbReference type="GO" id="GO:0017148">
    <property type="term" value="P:negative regulation of translation"/>
    <property type="evidence" value="ECO:0007669"/>
    <property type="project" value="TreeGrafter"/>
</dbReference>
<dbReference type="GO" id="GO:0006412">
    <property type="term" value="P:translation"/>
    <property type="evidence" value="ECO:0007669"/>
    <property type="project" value="UniProtKB-UniRule"/>
</dbReference>
<dbReference type="CDD" id="cd00392">
    <property type="entry name" value="Ribosomal_L13"/>
    <property type="match status" value="1"/>
</dbReference>
<dbReference type="FunFam" id="3.90.1180.10:FF:000001">
    <property type="entry name" value="50S ribosomal protein L13"/>
    <property type="match status" value="1"/>
</dbReference>
<dbReference type="Gene3D" id="3.90.1180.10">
    <property type="entry name" value="Ribosomal protein L13"/>
    <property type="match status" value="1"/>
</dbReference>
<dbReference type="HAMAP" id="MF_01366">
    <property type="entry name" value="Ribosomal_uL13"/>
    <property type="match status" value="1"/>
</dbReference>
<dbReference type="InterPro" id="IPR005822">
    <property type="entry name" value="Ribosomal_uL13"/>
</dbReference>
<dbReference type="InterPro" id="IPR005823">
    <property type="entry name" value="Ribosomal_uL13_bac-type"/>
</dbReference>
<dbReference type="InterPro" id="IPR023563">
    <property type="entry name" value="Ribosomal_uL13_CS"/>
</dbReference>
<dbReference type="InterPro" id="IPR036899">
    <property type="entry name" value="Ribosomal_uL13_sf"/>
</dbReference>
<dbReference type="NCBIfam" id="TIGR01066">
    <property type="entry name" value="rplM_bact"/>
    <property type="match status" value="1"/>
</dbReference>
<dbReference type="PANTHER" id="PTHR11545:SF2">
    <property type="entry name" value="LARGE RIBOSOMAL SUBUNIT PROTEIN UL13M"/>
    <property type="match status" value="1"/>
</dbReference>
<dbReference type="PANTHER" id="PTHR11545">
    <property type="entry name" value="RIBOSOMAL PROTEIN L13"/>
    <property type="match status" value="1"/>
</dbReference>
<dbReference type="Pfam" id="PF00572">
    <property type="entry name" value="Ribosomal_L13"/>
    <property type="match status" value="1"/>
</dbReference>
<dbReference type="PIRSF" id="PIRSF002181">
    <property type="entry name" value="Ribosomal_L13"/>
    <property type="match status" value="1"/>
</dbReference>
<dbReference type="SUPFAM" id="SSF52161">
    <property type="entry name" value="Ribosomal protein L13"/>
    <property type="match status" value="1"/>
</dbReference>
<dbReference type="PROSITE" id="PS00783">
    <property type="entry name" value="RIBOSOMAL_L13"/>
    <property type="match status" value="1"/>
</dbReference>
<feature type="chain" id="PRO_1000055466" description="Large ribosomal subunit protein uL13">
    <location>
        <begin position="1"/>
        <end position="142"/>
    </location>
</feature>